<dbReference type="EMBL" id="CP000448">
    <property type="protein sequence ID" value="ABI68295.1"/>
    <property type="molecule type" value="Genomic_DNA"/>
</dbReference>
<dbReference type="RefSeq" id="WP_011640400.1">
    <property type="nucleotide sequence ID" value="NC_008346.1"/>
</dbReference>
<dbReference type="SMR" id="Q0AYA9"/>
<dbReference type="STRING" id="335541.Swol_0980"/>
<dbReference type="KEGG" id="swo:Swol_0980"/>
<dbReference type="eggNOG" id="COG1923">
    <property type="taxonomic scope" value="Bacteria"/>
</dbReference>
<dbReference type="HOGENOM" id="CLU_113688_0_2_9"/>
<dbReference type="OrthoDB" id="9799751at2"/>
<dbReference type="Proteomes" id="UP000001968">
    <property type="component" value="Chromosome"/>
</dbReference>
<dbReference type="GO" id="GO:0005829">
    <property type="term" value="C:cytosol"/>
    <property type="evidence" value="ECO:0007669"/>
    <property type="project" value="TreeGrafter"/>
</dbReference>
<dbReference type="GO" id="GO:0003723">
    <property type="term" value="F:RNA binding"/>
    <property type="evidence" value="ECO:0007669"/>
    <property type="project" value="UniProtKB-UniRule"/>
</dbReference>
<dbReference type="GO" id="GO:0006355">
    <property type="term" value="P:regulation of DNA-templated transcription"/>
    <property type="evidence" value="ECO:0007669"/>
    <property type="project" value="InterPro"/>
</dbReference>
<dbReference type="GO" id="GO:0043487">
    <property type="term" value="P:regulation of RNA stability"/>
    <property type="evidence" value="ECO:0007669"/>
    <property type="project" value="TreeGrafter"/>
</dbReference>
<dbReference type="GO" id="GO:0045974">
    <property type="term" value="P:regulation of translation, ncRNA-mediated"/>
    <property type="evidence" value="ECO:0007669"/>
    <property type="project" value="TreeGrafter"/>
</dbReference>
<dbReference type="CDD" id="cd01716">
    <property type="entry name" value="Hfq"/>
    <property type="match status" value="1"/>
</dbReference>
<dbReference type="Gene3D" id="2.30.30.100">
    <property type="match status" value="1"/>
</dbReference>
<dbReference type="HAMAP" id="MF_00436">
    <property type="entry name" value="Hfq"/>
    <property type="match status" value="1"/>
</dbReference>
<dbReference type="InterPro" id="IPR005001">
    <property type="entry name" value="Hfq"/>
</dbReference>
<dbReference type="InterPro" id="IPR010920">
    <property type="entry name" value="LSM_dom_sf"/>
</dbReference>
<dbReference type="InterPro" id="IPR047575">
    <property type="entry name" value="Sm"/>
</dbReference>
<dbReference type="NCBIfam" id="TIGR02383">
    <property type="entry name" value="Hfq"/>
    <property type="match status" value="1"/>
</dbReference>
<dbReference type="NCBIfam" id="NF001602">
    <property type="entry name" value="PRK00395.1"/>
    <property type="match status" value="1"/>
</dbReference>
<dbReference type="PANTHER" id="PTHR34772">
    <property type="entry name" value="RNA-BINDING PROTEIN HFQ"/>
    <property type="match status" value="1"/>
</dbReference>
<dbReference type="PANTHER" id="PTHR34772:SF1">
    <property type="entry name" value="RNA-BINDING PROTEIN HFQ"/>
    <property type="match status" value="1"/>
</dbReference>
<dbReference type="Pfam" id="PF17209">
    <property type="entry name" value="Hfq"/>
    <property type="match status" value="1"/>
</dbReference>
<dbReference type="SUPFAM" id="SSF50182">
    <property type="entry name" value="Sm-like ribonucleoproteins"/>
    <property type="match status" value="1"/>
</dbReference>
<dbReference type="PROSITE" id="PS52002">
    <property type="entry name" value="SM"/>
    <property type="match status" value="1"/>
</dbReference>
<proteinExistence type="inferred from homology"/>
<accession>Q0AYA9</accession>
<comment type="function">
    <text evidence="1">RNA chaperone that binds small regulatory RNA (sRNAs) and mRNAs to facilitate mRNA translational regulation in response to envelope stress, environmental stress and changes in metabolite concentrations. Also binds with high specificity to tRNAs.</text>
</comment>
<comment type="subunit">
    <text evidence="1">Homohexamer.</text>
</comment>
<comment type="similarity">
    <text evidence="1">Belongs to the Hfq family.</text>
</comment>
<evidence type="ECO:0000255" key="1">
    <source>
        <dbReference type="HAMAP-Rule" id="MF_00436"/>
    </source>
</evidence>
<evidence type="ECO:0000255" key="2">
    <source>
        <dbReference type="PROSITE-ProRule" id="PRU01346"/>
    </source>
</evidence>
<name>HFQ_SYNWW</name>
<organism>
    <name type="scientific">Syntrophomonas wolfei subsp. wolfei (strain DSM 2245B / Goettingen)</name>
    <dbReference type="NCBI Taxonomy" id="335541"/>
    <lineage>
        <taxon>Bacteria</taxon>
        <taxon>Bacillati</taxon>
        <taxon>Bacillota</taxon>
        <taxon>Clostridia</taxon>
        <taxon>Eubacteriales</taxon>
        <taxon>Syntrophomonadaceae</taxon>
        <taxon>Syntrophomonas</taxon>
    </lineage>
</organism>
<feature type="chain" id="PRO_0000265197" description="RNA-binding protein Hfq">
    <location>
        <begin position="1"/>
        <end position="82"/>
    </location>
</feature>
<feature type="domain" description="Sm" evidence="2">
    <location>
        <begin position="10"/>
        <end position="70"/>
    </location>
</feature>
<protein>
    <recommendedName>
        <fullName evidence="1">RNA-binding protein Hfq</fullName>
    </recommendedName>
</protein>
<sequence>MSKSQINLQDAFLNQVRKDKIPVTVFLVNGFQIKGMVRGFDNFTVIIEVDQKQQLVYKHAISTVAPLRPISMLNLEAKSDDD</sequence>
<keyword id="KW-1185">Reference proteome</keyword>
<keyword id="KW-0694">RNA-binding</keyword>
<keyword id="KW-0346">Stress response</keyword>
<reference key="1">
    <citation type="journal article" date="2010" name="Environ. Microbiol.">
        <title>The genome of Syntrophomonas wolfei: new insights into syntrophic metabolism and biohydrogen production.</title>
        <authorList>
            <person name="Sieber J.R."/>
            <person name="Sims D.R."/>
            <person name="Han C."/>
            <person name="Kim E."/>
            <person name="Lykidis A."/>
            <person name="Lapidus A.L."/>
            <person name="McDonnald E."/>
            <person name="Rohlin L."/>
            <person name="Culley D.E."/>
            <person name="Gunsalus R."/>
            <person name="McInerney M.J."/>
        </authorList>
    </citation>
    <scope>NUCLEOTIDE SEQUENCE [LARGE SCALE GENOMIC DNA]</scope>
    <source>
        <strain>DSM 2245B / Goettingen</strain>
    </source>
</reference>
<gene>
    <name evidence="1" type="primary">hfq</name>
    <name type="ordered locus">Swol_0980</name>
</gene>